<sequence length="279" mass="30686">MSTGLLDSWADAGDEFSAPPEVIANPDGTKTVITFRTNQDGKKVKITQKIKEVKVQEKVHPLIAQRKNWKKYGKEKNSPPGPDTSTTQLGEKVDLKLGTSWKQDEKKEEEDKAHERAQKIAVQTIKCRVCGGDHYTAKCPFKDTLGAAAGVTPSGTTPEPTSEGGAGAAGAGKYVPRHLRADANGNVPTREARDDSTTLKVSQLNSFVDEDMLRNELFAKFGPLQRVTIVRNRETGESRGFAYVSFATEEIAQRALDTFNGKGYHSLILHLEWSKKKKT</sequence>
<dbReference type="EMBL" id="CP017623">
    <property type="protein sequence ID" value="AOW27026.1"/>
    <property type="molecule type" value="Genomic_DNA"/>
</dbReference>
<dbReference type="RefSeq" id="XP_715036.1">
    <property type="nucleotide sequence ID" value="XM_709943.1"/>
</dbReference>
<dbReference type="SMR" id="Q59ZV5"/>
<dbReference type="FunCoup" id="Q59ZV5">
    <property type="interactions" value="1143"/>
</dbReference>
<dbReference type="STRING" id="237561.Q59ZV5"/>
<dbReference type="EnsemblFungi" id="C1_14260C_A-T">
    <property type="protein sequence ID" value="C1_14260C_A-T-p1"/>
    <property type="gene ID" value="C1_14260C_A"/>
</dbReference>
<dbReference type="GeneID" id="3643308"/>
<dbReference type="KEGG" id="cal:CAALFM_C114260CA"/>
<dbReference type="CGD" id="CAL0000193017">
    <property type="gene designation" value="TIF35"/>
</dbReference>
<dbReference type="VEuPathDB" id="FungiDB:C1_14260C_A"/>
<dbReference type="eggNOG" id="KOG0122">
    <property type="taxonomic scope" value="Eukaryota"/>
</dbReference>
<dbReference type="HOGENOM" id="CLU_034595_0_0_1"/>
<dbReference type="InParanoid" id="Q59ZV5"/>
<dbReference type="OMA" id="ICQGDHF"/>
<dbReference type="OrthoDB" id="639027at2759"/>
<dbReference type="Proteomes" id="UP000000559">
    <property type="component" value="Chromosome 1"/>
</dbReference>
<dbReference type="GO" id="GO:0016282">
    <property type="term" value="C:eukaryotic 43S preinitiation complex"/>
    <property type="evidence" value="ECO:0007669"/>
    <property type="project" value="UniProtKB-UniRule"/>
</dbReference>
<dbReference type="GO" id="GO:0033290">
    <property type="term" value="C:eukaryotic 48S preinitiation complex"/>
    <property type="evidence" value="ECO:0007669"/>
    <property type="project" value="UniProtKB-UniRule"/>
</dbReference>
<dbReference type="GO" id="GO:0071540">
    <property type="term" value="C:eukaryotic translation initiation factor 3 complex, eIF3e"/>
    <property type="evidence" value="ECO:0007669"/>
    <property type="project" value="EnsemblFungi"/>
</dbReference>
<dbReference type="GO" id="GO:0071541">
    <property type="term" value="C:eukaryotic translation initiation factor 3 complex, eIF3m"/>
    <property type="evidence" value="ECO:0007669"/>
    <property type="project" value="EnsemblFungi"/>
</dbReference>
<dbReference type="GO" id="GO:0043614">
    <property type="term" value="C:multi-eIF complex"/>
    <property type="evidence" value="ECO:0007669"/>
    <property type="project" value="EnsemblFungi"/>
</dbReference>
<dbReference type="GO" id="GO:0003723">
    <property type="term" value="F:RNA binding"/>
    <property type="evidence" value="ECO:0007669"/>
    <property type="project" value="UniProtKB-UniRule"/>
</dbReference>
<dbReference type="GO" id="GO:0003743">
    <property type="term" value="F:translation initiation factor activity"/>
    <property type="evidence" value="ECO:0007669"/>
    <property type="project" value="UniProtKB-UniRule"/>
</dbReference>
<dbReference type="GO" id="GO:0001732">
    <property type="term" value="P:formation of cytoplasmic translation initiation complex"/>
    <property type="evidence" value="ECO:0007669"/>
    <property type="project" value="UniProtKB-UniRule"/>
</dbReference>
<dbReference type="GO" id="GO:0002188">
    <property type="term" value="P:translation reinitiation"/>
    <property type="evidence" value="ECO:0007669"/>
    <property type="project" value="EnsemblFungi"/>
</dbReference>
<dbReference type="GO" id="GO:0006415">
    <property type="term" value="P:translational termination"/>
    <property type="evidence" value="ECO:0007669"/>
    <property type="project" value="EnsemblFungi"/>
</dbReference>
<dbReference type="CDD" id="cd12933">
    <property type="entry name" value="eIF3G"/>
    <property type="match status" value="1"/>
</dbReference>
<dbReference type="CDD" id="cd12408">
    <property type="entry name" value="RRM_eIF3G_like"/>
    <property type="match status" value="1"/>
</dbReference>
<dbReference type="Gene3D" id="3.30.70.330">
    <property type="match status" value="1"/>
</dbReference>
<dbReference type="HAMAP" id="MF_03006">
    <property type="entry name" value="eIF3g"/>
    <property type="match status" value="1"/>
</dbReference>
<dbReference type="InterPro" id="IPR017334">
    <property type="entry name" value="eIF3_g"/>
</dbReference>
<dbReference type="InterPro" id="IPR024675">
    <property type="entry name" value="eIF3g_N"/>
</dbReference>
<dbReference type="InterPro" id="IPR034240">
    <property type="entry name" value="eIF3G_RRM"/>
</dbReference>
<dbReference type="InterPro" id="IPR012677">
    <property type="entry name" value="Nucleotide-bd_a/b_plait_sf"/>
</dbReference>
<dbReference type="InterPro" id="IPR035979">
    <property type="entry name" value="RBD_domain_sf"/>
</dbReference>
<dbReference type="InterPro" id="IPR000504">
    <property type="entry name" value="RRM_dom"/>
</dbReference>
<dbReference type="PANTHER" id="PTHR10352">
    <property type="entry name" value="EUKARYOTIC TRANSLATION INITIATION FACTOR 3 SUBUNIT G"/>
    <property type="match status" value="1"/>
</dbReference>
<dbReference type="Pfam" id="PF12353">
    <property type="entry name" value="eIF3g"/>
    <property type="match status" value="1"/>
</dbReference>
<dbReference type="Pfam" id="PF00076">
    <property type="entry name" value="RRM_1"/>
    <property type="match status" value="1"/>
</dbReference>
<dbReference type="PIRSF" id="PIRSF037949">
    <property type="entry name" value="Transl_init_eIF-3_RNA-bind"/>
    <property type="match status" value="1"/>
</dbReference>
<dbReference type="SMART" id="SM00360">
    <property type="entry name" value="RRM"/>
    <property type="match status" value="1"/>
</dbReference>
<dbReference type="SUPFAM" id="SSF54928">
    <property type="entry name" value="RNA-binding domain, RBD"/>
    <property type="match status" value="1"/>
</dbReference>
<dbReference type="PROSITE" id="PS50102">
    <property type="entry name" value="RRM"/>
    <property type="match status" value="1"/>
</dbReference>
<organism>
    <name type="scientific">Candida albicans (strain SC5314 / ATCC MYA-2876)</name>
    <name type="common">Yeast</name>
    <dbReference type="NCBI Taxonomy" id="237561"/>
    <lineage>
        <taxon>Eukaryota</taxon>
        <taxon>Fungi</taxon>
        <taxon>Dikarya</taxon>
        <taxon>Ascomycota</taxon>
        <taxon>Saccharomycotina</taxon>
        <taxon>Pichiomycetes</taxon>
        <taxon>Debaryomycetaceae</taxon>
        <taxon>Candida/Lodderomyces clade</taxon>
        <taxon>Candida</taxon>
    </lineage>
</organism>
<evidence type="ECO:0000255" key="1">
    <source>
        <dbReference type="HAMAP-Rule" id="MF_03006"/>
    </source>
</evidence>
<evidence type="ECO:0000256" key="2">
    <source>
        <dbReference type="SAM" id="MobiDB-lite"/>
    </source>
</evidence>
<name>EIF3G_CANAL</name>
<reference key="1">
    <citation type="journal article" date="2004" name="Proc. Natl. Acad. Sci. U.S.A.">
        <title>The diploid genome sequence of Candida albicans.</title>
        <authorList>
            <person name="Jones T."/>
            <person name="Federspiel N.A."/>
            <person name="Chibana H."/>
            <person name="Dungan J."/>
            <person name="Kalman S."/>
            <person name="Magee B.B."/>
            <person name="Newport G."/>
            <person name="Thorstenson Y.R."/>
            <person name="Agabian N."/>
            <person name="Magee P.T."/>
            <person name="Davis R.W."/>
            <person name="Scherer S."/>
        </authorList>
    </citation>
    <scope>NUCLEOTIDE SEQUENCE [LARGE SCALE GENOMIC DNA]</scope>
    <source>
        <strain>SC5314 / ATCC MYA-2876</strain>
    </source>
</reference>
<reference key="2">
    <citation type="journal article" date="2007" name="Genome Biol.">
        <title>Assembly of the Candida albicans genome into sixteen supercontigs aligned on the eight chromosomes.</title>
        <authorList>
            <person name="van het Hoog M."/>
            <person name="Rast T.J."/>
            <person name="Martchenko M."/>
            <person name="Grindle S."/>
            <person name="Dignard D."/>
            <person name="Hogues H."/>
            <person name="Cuomo C."/>
            <person name="Berriman M."/>
            <person name="Scherer S."/>
            <person name="Magee B.B."/>
            <person name="Whiteway M."/>
            <person name="Chibana H."/>
            <person name="Nantel A."/>
            <person name="Magee P.T."/>
        </authorList>
    </citation>
    <scope>GENOME REANNOTATION</scope>
    <source>
        <strain>SC5314 / ATCC MYA-2876</strain>
    </source>
</reference>
<reference key="3">
    <citation type="journal article" date="2013" name="Genome Biol.">
        <title>Assembly of a phased diploid Candida albicans genome facilitates allele-specific measurements and provides a simple model for repeat and indel structure.</title>
        <authorList>
            <person name="Muzzey D."/>
            <person name="Schwartz K."/>
            <person name="Weissman J.S."/>
            <person name="Sherlock G."/>
        </authorList>
    </citation>
    <scope>NUCLEOTIDE SEQUENCE [LARGE SCALE GENOMIC DNA]</scope>
    <scope>GENOME REANNOTATION</scope>
    <source>
        <strain>SC5314 / ATCC MYA-2876</strain>
    </source>
</reference>
<feature type="chain" id="PRO_0000365438" description="Eukaryotic translation initiation factor 3 subunit G">
    <location>
        <begin position="1"/>
        <end position="279"/>
    </location>
</feature>
<feature type="domain" description="RRM" evidence="1">
    <location>
        <begin position="197"/>
        <end position="276"/>
    </location>
</feature>
<feature type="region of interest" description="Disordered" evidence="2">
    <location>
        <begin position="1"/>
        <end position="26"/>
    </location>
</feature>
<feature type="region of interest" description="Disordered" evidence="2">
    <location>
        <begin position="66"/>
        <end position="115"/>
    </location>
</feature>
<feature type="region of interest" description="Disordered" evidence="2">
    <location>
        <begin position="152"/>
        <end position="171"/>
    </location>
</feature>
<feature type="compositionally biased region" description="Basic and acidic residues" evidence="2">
    <location>
        <begin position="102"/>
        <end position="115"/>
    </location>
</feature>
<feature type="compositionally biased region" description="Low complexity" evidence="2">
    <location>
        <begin position="152"/>
        <end position="163"/>
    </location>
</feature>
<feature type="modified residue" description="Phosphoserine" evidence="1">
    <location>
        <position position="78"/>
    </location>
</feature>
<protein>
    <recommendedName>
        <fullName evidence="1">Eukaryotic translation initiation factor 3 subunit G</fullName>
        <shortName evidence="1">eIF3g</shortName>
    </recommendedName>
    <alternativeName>
        <fullName evidence="1">Eukaryotic translation initiation factor 3 RNA-binding subunit</fullName>
        <shortName evidence="1">eIF-3 RNA-binding subunit</shortName>
    </alternativeName>
    <alternativeName>
        <fullName evidence="1">Translation initiation factor eIF3 p33 subunit homolog</fullName>
        <shortName evidence="1">eIF3 p33 homolog</shortName>
    </alternativeName>
</protein>
<keyword id="KW-0963">Cytoplasm</keyword>
<keyword id="KW-0396">Initiation factor</keyword>
<keyword id="KW-0597">Phosphoprotein</keyword>
<keyword id="KW-0648">Protein biosynthesis</keyword>
<keyword id="KW-1185">Reference proteome</keyword>
<keyword id="KW-0694">RNA-binding</keyword>
<comment type="function">
    <text evidence="1">RNA-binding component of the eukaryotic translation initiation factor 3 (eIF-3) complex, which is involved in protein synthesis of a specialized repertoire of mRNAs and, together with other initiation factors, stimulates binding of mRNA and methionyl-tRNAi to the 40S ribosome. The eIF-3 complex specifically targets and initiates translation of a subset of mRNAs involved in cell proliferation. This subunit can bind 18S rRNA.</text>
</comment>
<comment type="subunit">
    <text evidence="1">Component of the eukaryotic translation initiation factor 3 (eIF-3) complex.</text>
</comment>
<comment type="subcellular location">
    <subcellularLocation>
        <location evidence="1">Cytoplasm</location>
    </subcellularLocation>
</comment>
<comment type="similarity">
    <text evidence="1">Belongs to the eIF-3 subunit G family.</text>
</comment>
<gene>
    <name evidence="1" type="primary">TIF35</name>
    <name type="ordered locus">CAALFM_C114260CA</name>
    <name type="ORF">CaO19.7236</name>
</gene>
<accession>Q59ZV5</accession>
<accession>A0A1D8PFX0</accession>
<proteinExistence type="inferred from homology"/>